<evidence type="ECO:0000250" key="1"/>
<evidence type="ECO:0000250" key="2">
    <source>
        <dbReference type="UniProtKB" id="A6IPG1"/>
    </source>
</evidence>
<evidence type="ECO:0000250" key="3">
    <source>
        <dbReference type="UniProtKB" id="P24534"/>
    </source>
</evidence>
<evidence type="ECO:0000250" key="4">
    <source>
        <dbReference type="UniProtKB" id="P32471"/>
    </source>
</evidence>
<evidence type="ECO:0000256" key="5">
    <source>
        <dbReference type="SAM" id="MobiDB-lite"/>
    </source>
</evidence>
<evidence type="ECO:0000269" key="6">
    <source>
    </source>
</evidence>
<evidence type="ECO:0000305" key="7"/>
<evidence type="ECO:0007744" key="8">
    <source>
    </source>
</evidence>
<evidence type="ECO:0007744" key="9">
    <source>
    </source>
</evidence>
<evidence type="ECO:0007744" key="10">
    <source>
    </source>
</evidence>
<evidence type="ECO:0007744" key="11">
    <source>
    </source>
</evidence>
<evidence type="ECO:0007744" key="12">
    <source>
    </source>
</evidence>
<evidence type="ECO:0007744" key="13">
    <source>
    </source>
</evidence>
<organism>
    <name type="scientific">Mus musculus</name>
    <name type="common">Mouse</name>
    <dbReference type="NCBI Taxonomy" id="10090"/>
    <lineage>
        <taxon>Eukaryota</taxon>
        <taxon>Metazoa</taxon>
        <taxon>Chordata</taxon>
        <taxon>Craniata</taxon>
        <taxon>Vertebrata</taxon>
        <taxon>Euteleostomi</taxon>
        <taxon>Mammalia</taxon>
        <taxon>Eutheria</taxon>
        <taxon>Euarchontoglires</taxon>
        <taxon>Glires</taxon>
        <taxon>Rodentia</taxon>
        <taxon>Myomorpha</taxon>
        <taxon>Muroidea</taxon>
        <taxon>Muridae</taxon>
        <taxon>Murinae</taxon>
        <taxon>Mus</taxon>
        <taxon>Mus</taxon>
    </lineage>
</organism>
<gene>
    <name type="primary">Eef1b</name>
    <name type="synonym">Eef1b2</name>
</gene>
<sequence length="225" mass="24694">MGFGDLKTPAGLQVLNDYLADKSYIEGYVPSQADVAVFEAVSGPPPADLCHALRWYNHIKSYEKEKASLPGVKKSLGKYGPSSVEDTTGSGAADAKDDDDIDLFGSDDEEESEEAKKLREERLAQYESKKAKKPAVVAKSSILLDVKPWDDETDMTKLEECVRSIQADGLVWGSSKLVPVGYGIKKLQIQCVVEDDKVGTDMLEEQITAFEDYVQSMDVAAFNKI</sequence>
<keyword id="KW-0007">Acetylation</keyword>
<keyword id="KW-0903">Direct protein sequencing</keyword>
<keyword id="KW-0251">Elongation factor</keyword>
<keyword id="KW-1017">Isopeptide bond</keyword>
<keyword id="KW-0597">Phosphoprotein</keyword>
<keyword id="KW-0648">Protein biosynthesis</keyword>
<keyword id="KW-1185">Reference proteome</keyword>
<keyword id="KW-0832">Ubl conjugation</keyword>
<proteinExistence type="evidence at protein level"/>
<dbReference type="EMBL" id="AF029844">
    <property type="protein sequence ID" value="AAC13264.2"/>
    <property type="molecule type" value="mRNA"/>
</dbReference>
<dbReference type="EMBL" id="AK012756">
    <property type="protein sequence ID" value="BAB28447.1"/>
    <property type="molecule type" value="mRNA"/>
</dbReference>
<dbReference type="EMBL" id="AK027911">
    <property type="protein sequence ID" value="BAC25661.1"/>
    <property type="molecule type" value="mRNA"/>
</dbReference>
<dbReference type="EMBL" id="AK168191">
    <property type="protein sequence ID" value="BAE40151.1"/>
    <property type="molecule type" value="mRNA"/>
</dbReference>
<dbReference type="EMBL" id="AL645950">
    <property type="status" value="NOT_ANNOTATED_CDS"/>
    <property type="molecule type" value="Genomic_DNA"/>
</dbReference>
<dbReference type="EMBL" id="BC003899">
    <property type="protein sequence ID" value="AAH03899.1"/>
    <property type="molecule type" value="mRNA"/>
</dbReference>
<dbReference type="EMBL" id="BC023139">
    <property type="protein sequence ID" value="AAH23139.1"/>
    <property type="molecule type" value="mRNA"/>
</dbReference>
<dbReference type="EMBL" id="BC039635">
    <property type="protein sequence ID" value="AAH39635.1"/>
    <property type="status" value="ALT_INIT"/>
    <property type="molecule type" value="mRNA"/>
</dbReference>
<dbReference type="CCDS" id="CCDS14997.1"/>
<dbReference type="PIR" id="PC7074">
    <property type="entry name" value="PC7074"/>
</dbReference>
<dbReference type="RefSeq" id="NP_061266.2">
    <property type="nucleotide sequence ID" value="NM_018796.3"/>
</dbReference>
<dbReference type="BMRB" id="O70251"/>
<dbReference type="SMR" id="O70251"/>
<dbReference type="BioGRID" id="207744">
    <property type="interactions" value="87"/>
</dbReference>
<dbReference type="DIP" id="DIP-32121N"/>
<dbReference type="FunCoup" id="O70251">
    <property type="interactions" value="3514"/>
</dbReference>
<dbReference type="IntAct" id="O70251">
    <property type="interactions" value="3"/>
</dbReference>
<dbReference type="MINT" id="O70251"/>
<dbReference type="STRING" id="10090.ENSMUSP00000116492"/>
<dbReference type="GlyGen" id="O70251">
    <property type="glycosylation" value="1 site, 1 O-linked glycan (1 site)"/>
</dbReference>
<dbReference type="iPTMnet" id="O70251"/>
<dbReference type="PhosphoSitePlus" id="O70251"/>
<dbReference type="SwissPalm" id="O70251"/>
<dbReference type="CPTAC" id="non-CPTAC-3793"/>
<dbReference type="jPOST" id="O70251"/>
<dbReference type="PaxDb" id="10090-ENSMUSP00000116492"/>
<dbReference type="PeptideAtlas" id="O70251"/>
<dbReference type="ProteomicsDB" id="275905"/>
<dbReference type="Pumba" id="O70251"/>
<dbReference type="TopDownProteomics" id="O70251"/>
<dbReference type="Antibodypedia" id="34177">
    <property type="antibodies" value="217 antibodies from 30 providers"/>
</dbReference>
<dbReference type="DNASU" id="55949"/>
<dbReference type="Ensembl" id="ENSMUST00000129339.8">
    <property type="protein sequence ID" value="ENSMUSP00000116492.2"/>
    <property type="gene ID" value="ENSMUSG00000025967.17"/>
</dbReference>
<dbReference type="GeneID" id="55949"/>
<dbReference type="KEGG" id="mmu:55949"/>
<dbReference type="UCSC" id="uc007bfz.2">
    <property type="organism name" value="mouse"/>
</dbReference>
<dbReference type="AGR" id="MGI:1929520"/>
<dbReference type="CTD" id="1933"/>
<dbReference type="MGI" id="MGI:1929520">
    <property type="gene designation" value="Eef1b2"/>
</dbReference>
<dbReference type="VEuPathDB" id="HostDB:ENSMUSG00000025967"/>
<dbReference type="eggNOG" id="KOG1668">
    <property type="taxonomic scope" value="Eukaryota"/>
</dbReference>
<dbReference type="GeneTree" id="ENSGT00950000183014"/>
<dbReference type="HOGENOM" id="CLU_050172_0_0_1"/>
<dbReference type="InParanoid" id="O70251"/>
<dbReference type="OMA" id="YRWYKHI"/>
<dbReference type="OrthoDB" id="331763at2759"/>
<dbReference type="PhylomeDB" id="O70251"/>
<dbReference type="TreeFam" id="TF313134"/>
<dbReference type="Reactome" id="R-MMU-156842">
    <property type="pathway name" value="Eukaryotic Translation Elongation"/>
</dbReference>
<dbReference type="BioGRID-ORCS" id="55949">
    <property type="hits" value="5 hits in 76 CRISPR screens"/>
</dbReference>
<dbReference type="CD-CODE" id="CE726F99">
    <property type="entry name" value="Postsynaptic density"/>
</dbReference>
<dbReference type="ChiTaRS" id="Eef1b2">
    <property type="organism name" value="mouse"/>
</dbReference>
<dbReference type="PRO" id="PR:O70251"/>
<dbReference type="Proteomes" id="UP000000589">
    <property type="component" value="Chromosome 1"/>
</dbReference>
<dbReference type="RNAct" id="O70251">
    <property type="molecule type" value="protein"/>
</dbReference>
<dbReference type="Bgee" id="ENSMUSG00000025967">
    <property type="expression patterns" value="Expressed in hindlimb bud and 92 other cell types or tissues"/>
</dbReference>
<dbReference type="ExpressionAtlas" id="O70251">
    <property type="expression patterns" value="baseline and differential"/>
</dbReference>
<dbReference type="GO" id="GO:0005783">
    <property type="term" value="C:endoplasmic reticulum"/>
    <property type="evidence" value="ECO:0007669"/>
    <property type="project" value="Ensembl"/>
</dbReference>
<dbReference type="GO" id="GO:0005853">
    <property type="term" value="C:eukaryotic translation elongation factor 1 complex"/>
    <property type="evidence" value="ECO:0000250"/>
    <property type="project" value="MGI"/>
</dbReference>
<dbReference type="GO" id="GO:0003746">
    <property type="term" value="F:translation elongation factor activity"/>
    <property type="evidence" value="ECO:0000250"/>
    <property type="project" value="MGI"/>
</dbReference>
<dbReference type="GO" id="GO:0045471">
    <property type="term" value="P:response to ethanol"/>
    <property type="evidence" value="ECO:0007669"/>
    <property type="project" value="Ensembl"/>
</dbReference>
<dbReference type="CDD" id="cd00292">
    <property type="entry name" value="EF1B"/>
    <property type="match status" value="1"/>
</dbReference>
<dbReference type="CDD" id="cd10308">
    <property type="entry name" value="GST_C_eEF1b_like"/>
    <property type="match status" value="1"/>
</dbReference>
<dbReference type="FunFam" id="3.30.70.60:FF:000001">
    <property type="entry name" value="Elongation factor 1-beta 1 like"/>
    <property type="match status" value="1"/>
</dbReference>
<dbReference type="FunFam" id="1.20.1050.130:FF:000001">
    <property type="entry name" value="Putative Elongation factor 1-beta"/>
    <property type="match status" value="1"/>
</dbReference>
<dbReference type="Gene3D" id="1.20.1050.130">
    <property type="match status" value="1"/>
</dbReference>
<dbReference type="Gene3D" id="3.30.70.60">
    <property type="match status" value="1"/>
</dbReference>
<dbReference type="InterPro" id="IPR036219">
    <property type="entry name" value="eEF-1beta-like_sf"/>
</dbReference>
<dbReference type="InterPro" id="IPR018940">
    <property type="entry name" value="EF-1_beta_acid_region_euk"/>
</dbReference>
<dbReference type="InterPro" id="IPR049720">
    <property type="entry name" value="EF1B_bsu/dsu"/>
</dbReference>
<dbReference type="InterPro" id="IPR014038">
    <property type="entry name" value="EF1B_bsu/dsu_GNE"/>
</dbReference>
<dbReference type="InterPro" id="IPR036282">
    <property type="entry name" value="Glutathione-S-Trfase_C_sf"/>
</dbReference>
<dbReference type="InterPro" id="IPR014717">
    <property type="entry name" value="Transl_elong_EF1B/ribsomal_bS6"/>
</dbReference>
<dbReference type="InterPro" id="IPR001326">
    <property type="entry name" value="Transl_elong_EF1B_B/D_CS"/>
</dbReference>
<dbReference type="PANTHER" id="PTHR11595">
    <property type="entry name" value="EF-HAND AND COILED-COIL DOMAIN-CONTAINING FAMILY MEMBER"/>
    <property type="match status" value="1"/>
</dbReference>
<dbReference type="PANTHER" id="PTHR11595:SF21">
    <property type="entry name" value="ELONGATION FACTOR 1-BETA"/>
    <property type="match status" value="1"/>
</dbReference>
<dbReference type="Pfam" id="PF10587">
    <property type="entry name" value="EF-1_beta_acid"/>
    <property type="match status" value="1"/>
</dbReference>
<dbReference type="Pfam" id="PF00736">
    <property type="entry name" value="EF1_GNE"/>
    <property type="match status" value="1"/>
</dbReference>
<dbReference type="SMART" id="SM01182">
    <property type="entry name" value="EF-1_beta_acid"/>
    <property type="match status" value="1"/>
</dbReference>
<dbReference type="SMART" id="SM00888">
    <property type="entry name" value="EF1_GNE"/>
    <property type="match status" value="1"/>
</dbReference>
<dbReference type="SUPFAM" id="SSF54984">
    <property type="entry name" value="eEF-1beta-like"/>
    <property type="match status" value="1"/>
</dbReference>
<dbReference type="SUPFAM" id="SSF47616">
    <property type="entry name" value="GST C-terminal domain-like"/>
    <property type="match status" value="1"/>
</dbReference>
<dbReference type="PROSITE" id="PS00824">
    <property type="entry name" value="EF1BD_1"/>
    <property type="match status" value="1"/>
</dbReference>
<dbReference type="PROSITE" id="PS00825">
    <property type="entry name" value="EF1BD_2"/>
    <property type="match status" value="1"/>
</dbReference>
<reference key="1">
    <citation type="submission" date="1999-09" db="EMBL/GenBank/DDBJ databases">
        <title>Cloning and expression analysis of a novel mouse gene homologous to human elongation factor 1-beta.</title>
        <authorList>
            <person name="Tu Q."/>
            <person name="Yu L."/>
            <person name="Fu Q."/>
            <person name="Liu Q."/>
            <person name="Gong R."/>
            <person name="Zhao S."/>
        </authorList>
    </citation>
    <scope>NUCLEOTIDE SEQUENCE [MRNA]</scope>
</reference>
<reference key="2">
    <citation type="journal article" date="2005" name="Science">
        <title>The transcriptional landscape of the mammalian genome.</title>
        <authorList>
            <person name="Carninci P."/>
            <person name="Kasukawa T."/>
            <person name="Katayama S."/>
            <person name="Gough J."/>
            <person name="Frith M.C."/>
            <person name="Maeda N."/>
            <person name="Oyama R."/>
            <person name="Ravasi T."/>
            <person name="Lenhard B."/>
            <person name="Wells C."/>
            <person name="Kodzius R."/>
            <person name="Shimokawa K."/>
            <person name="Bajic V.B."/>
            <person name="Brenner S.E."/>
            <person name="Batalov S."/>
            <person name="Forrest A.R."/>
            <person name="Zavolan M."/>
            <person name="Davis M.J."/>
            <person name="Wilming L.G."/>
            <person name="Aidinis V."/>
            <person name="Allen J.E."/>
            <person name="Ambesi-Impiombato A."/>
            <person name="Apweiler R."/>
            <person name="Aturaliya R.N."/>
            <person name="Bailey T.L."/>
            <person name="Bansal M."/>
            <person name="Baxter L."/>
            <person name="Beisel K.W."/>
            <person name="Bersano T."/>
            <person name="Bono H."/>
            <person name="Chalk A.M."/>
            <person name="Chiu K.P."/>
            <person name="Choudhary V."/>
            <person name="Christoffels A."/>
            <person name="Clutterbuck D.R."/>
            <person name="Crowe M.L."/>
            <person name="Dalla E."/>
            <person name="Dalrymple B.P."/>
            <person name="de Bono B."/>
            <person name="Della Gatta G."/>
            <person name="di Bernardo D."/>
            <person name="Down T."/>
            <person name="Engstrom P."/>
            <person name="Fagiolini M."/>
            <person name="Faulkner G."/>
            <person name="Fletcher C.F."/>
            <person name="Fukushima T."/>
            <person name="Furuno M."/>
            <person name="Futaki S."/>
            <person name="Gariboldi M."/>
            <person name="Georgii-Hemming P."/>
            <person name="Gingeras T.R."/>
            <person name="Gojobori T."/>
            <person name="Green R.E."/>
            <person name="Gustincich S."/>
            <person name="Harbers M."/>
            <person name="Hayashi Y."/>
            <person name="Hensch T.K."/>
            <person name="Hirokawa N."/>
            <person name="Hill D."/>
            <person name="Huminiecki L."/>
            <person name="Iacono M."/>
            <person name="Ikeo K."/>
            <person name="Iwama A."/>
            <person name="Ishikawa T."/>
            <person name="Jakt M."/>
            <person name="Kanapin A."/>
            <person name="Katoh M."/>
            <person name="Kawasawa Y."/>
            <person name="Kelso J."/>
            <person name="Kitamura H."/>
            <person name="Kitano H."/>
            <person name="Kollias G."/>
            <person name="Krishnan S.P."/>
            <person name="Kruger A."/>
            <person name="Kummerfeld S.K."/>
            <person name="Kurochkin I.V."/>
            <person name="Lareau L.F."/>
            <person name="Lazarevic D."/>
            <person name="Lipovich L."/>
            <person name="Liu J."/>
            <person name="Liuni S."/>
            <person name="McWilliam S."/>
            <person name="Madan Babu M."/>
            <person name="Madera M."/>
            <person name="Marchionni L."/>
            <person name="Matsuda H."/>
            <person name="Matsuzawa S."/>
            <person name="Miki H."/>
            <person name="Mignone F."/>
            <person name="Miyake S."/>
            <person name="Morris K."/>
            <person name="Mottagui-Tabar S."/>
            <person name="Mulder N."/>
            <person name="Nakano N."/>
            <person name="Nakauchi H."/>
            <person name="Ng P."/>
            <person name="Nilsson R."/>
            <person name="Nishiguchi S."/>
            <person name="Nishikawa S."/>
            <person name="Nori F."/>
            <person name="Ohara O."/>
            <person name="Okazaki Y."/>
            <person name="Orlando V."/>
            <person name="Pang K.C."/>
            <person name="Pavan W.J."/>
            <person name="Pavesi G."/>
            <person name="Pesole G."/>
            <person name="Petrovsky N."/>
            <person name="Piazza S."/>
            <person name="Reed J."/>
            <person name="Reid J.F."/>
            <person name="Ring B.Z."/>
            <person name="Ringwald M."/>
            <person name="Rost B."/>
            <person name="Ruan Y."/>
            <person name="Salzberg S.L."/>
            <person name="Sandelin A."/>
            <person name="Schneider C."/>
            <person name="Schoenbach C."/>
            <person name="Sekiguchi K."/>
            <person name="Semple C.A."/>
            <person name="Seno S."/>
            <person name="Sessa L."/>
            <person name="Sheng Y."/>
            <person name="Shibata Y."/>
            <person name="Shimada H."/>
            <person name="Shimada K."/>
            <person name="Silva D."/>
            <person name="Sinclair B."/>
            <person name="Sperling S."/>
            <person name="Stupka E."/>
            <person name="Sugiura K."/>
            <person name="Sultana R."/>
            <person name="Takenaka Y."/>
            <person name="Taki K."/>
            <person name="Tammoja K."/>
            <person name="Tan S.L."/>
            <person name="Tang S."/>
            <person name="Taylor M.S."/>
            <person name="Tegner J."/>
            <person name="Teichmann S.A."/>
            <person name="Ueda H.R."/>
            <person name="van Nimwegen E."/>
            <person name="Verardo R."/>
            <person name="Wei C.L."/>
            <person name="Yagi K."/>
            <person name="Yamanishi H."/>
            <person name="Zabarovsky E."/>
            <person name="Zhu S."/>
            <person name="Zimmer A."/>
            <person name="Hide W."/>
            <person name="Bult C."/>
            <person name="Grimmond S.M."/>
            <person name="Teasdale R.D."/>
            <person name="Liu E.T."/>
            <person name="Brusic V."/>
            <person name="Quackenbush J."/>
            <person name="Wahlestedt C."/>
            <person name="Mattick J.S."/>
            <person name="Hume D.A."/>
            <person name="Kai C."/>
            <person name="Sasaki D."/>
            <person name="Tomaru Y."/>
            <person name="Fukuda S."/>
            <person name="Kanamori-Katayama M."/>
            <person name="Suzuki M."/>
            <person name="Aoki J."/>
            <person name="Arakawa T."/>
            <person name="Iida J."/>
            <person name="Imamura K."/>
            <person name="Itoh M."/>
            <person name="Kato T."/>
            <person name="Kawaji H."/>
            <person name="Kawagashira N."/>
            <person name="Kawashima T."/>
            <person name="Kojima M."/>
            <person name="Kondo S."/>
            <person name="Konno H."/>
            <person name="Nakano K."/>
            <person name="Ninomiya N."/>
            <person name="Nishio T."/>
            <person name="Okada M."/>
            <person name="Plessy C."/>
            <person name="Shibata K."/>
            <person name="Shiraki T."/>
            <person name="Suzuki S."/>
            <person name="Tagami M."/>
            <person name="Waki K."/>
            <person name="Watahiki A."/>
            <person name="Okamura-Oho Y."/>
            <person name="Suzuki H."/>
            <person name="Kawai J."/>
            <person name="Hayashizaki Y."/>
        </authorList>
    </citation>
    <scope>NUCLEOTIDE SEQUENCE [LARGE SCALE MRNA]</scope>
    <source>
        <strain>BALB/cJ</strain>
        <strain>C57BL/6J</strain>
        <tissue>Kidney</tissue>
    </source>
</reference>
<reference key="3">
    <citation type="journal article" date="2009" name="PLoS Biol.">
        <title>Lineage-specific biology revealed by a finished genome assembly of the mouse.</title>
        <authorList>
            <person name="Church D.M."/>
            <person name="Goodstadt L."/>
            <person name="Hillier L.W."/>
            <person name="Zody M.C."/>
            <person name="Goldstein S."/>
            <person name="She X."/>
            <person name="Bult C.J."/>
            <person name="Agarwala R."/>
            <person name="Cherry J.L."/>
            <person name="DiCuccio M."/>
            <person name="Hlavina W."/>
            <person name="Kapustin Y."/>
            <person name="Meric P."/>
            <person name="Maglott D."/>
            <person name="Birtle Z."/>
            <person name="Marques A.C."/>
            <person name="Graves T."/>
            <person name="Zhou S."/>
            <person name="Teague B."/>
            <person name="Potamousis K."/>
            <person name="Churas C."/>
            <person name="Place M."/>
            <person name="Herschleb J."/>
            <person name="Runnheim R."/>
            <person name="Forrest D."/>
            <person name="Amos-Landgraf J."/>
            <person name="Schwartz D.C."/>
            <person name="Cheng Z."/>
            <person name="Lindblad-Toh K."/>
            <person name="Eichler E.E."/>
            <person name="Ponting C.P."/>
        </authorList>
    </citation>
    <scope>NUCLEOTIDE SEQUENCE [LARGE SCALE GENOMIC DNA]</scope>
    <source>
        <strain>C57BL/6J</strain>
    </source>
</reference>
<reference key="4">
    <citation type="journal article" date="2004" name="Genome Res.">
        <title>The status, quality, and expansion of the NIH full-length cDNA project: the Mammalian Gene Collection (MGC).</title>
        <authorList>
            <consortium name="The MGC Project Team"/>
        </authorList>
    </citation>
    <scope>NUCLEOTIDE SEQUENCE [LARGE SCALE MRNA]</scope>
    <source>
        <strain>FVB/N</strain>
        <tissue>Liver</tissue>
        <tissue>Mammary gland</tissue>
    </source>
</reference>
<reference key="5">
    <citation type="journal article" date="2000" name="Electrophoresis">
        <title>Proteome analysis of mouse brain: two-dimensional electrophoresis profiles of tissue proteins during the course of aging.</title>
        <authorList>
            <person name="Tsugita A."/>
            <person name="Kawakami T."/>
            <person name="Uchida T."/>
            <person name="Sakai T."/>
            <person name="Kamo M."/>
            <person name="Matsui T."/>
            <person name="Watanabe Y."/>
            <person name="Morimasa T."/>
            <person name="Hosokawa K."/>
            <person name="Toda T."/>
        </authorList>
    </citation>
    <scope>PROTEIN SEQUENCE OF 2-10</scope>
    <source>
        <strain>C57BL/6J</strain>
        <tissue>Brain</tissue>
    </source>
</reference>
<reference key="6">
    <citation type="journal article" date="2004" name="Mol. Cell. Proteomics">
        <title>Phosphoproteomic analysis of the developing mouse brain.</title>
        <authorList>
            <person name="Ballif B.A."/>
            <person name="Villen J."/>
            <person name="Beausoleil S.A."/>
            <person name="Schwartz D."/>
            <person name="Gygi S.P."/>
        </authorList>
    </citation>
    <scope>PHOSPHORYLATION [LARGE SCALE ANALYSIS] AT SER-106</scope>
    <scope>IDENTIFICATION BY MASS SPECTROMETRY [LARGE SCALE ANALYSIS]</scope>
    <source>
        <tissue>Embryonic brain</tissue>
    </source>
</reference>
<reference key="7">
    <citation type="journal article" date="2007" name="Proc. Natl. Acad. Sci. U.S.A.">
        <title>Large-scale phosphorylation analysis of mouse liver.</title>
        <authorList>
            <person name="Villen J."/>
            <person name="Beausoleil S.A."/>
            <person name="Gerber S.A."/>
            <person name="Gygi S.P."/>
        </authorList>
    </citation>
    <scope>PHOSPHORYLATION [LARGE SCALE ANALYSIS] AT SER-106</scope>
    <scope>IDENTIFICATION BY MASS SPECTROMETRY [LARGE SCALE ANALYSIS]</scope>
    <source>
        <tissue>Liver</tissue>
    </source>
</reference>
<reference key="8">
    <citation type="journal article" date="2008" name="J. Proteome Res.">
        <title>Specific phosphopeptide enrichment with immobilized titanium ion affinity chromatography adsorbent for phosphoproteome analysis.</title>
        <authorList>
            <person name="Zhou H."/>
            <person name="Ye M."/>
            <person name="Dong J."/>
            <person name="Han G."/>
            <person name="Jiang X."/>
            <person name="Wu R."/>
            <person name="Zou H."/>
        </authorList>
    </citation>
    <scope>PHOSPHORYLATION [LARGE SCALE ANALYSIS] AT SER-106</scope>
    <scope>IDENTIFICATION BY MASS SPECTROMETRY [LARGE SCALE ANALYSIS]</scope>
    <source>
        <tissue>Liver</tissue>
    </source>
</reference>
<reference key="9">
    <citation type="journal article" date="2009" name="Immunity">
        <title>The phagosomal proteome in interferon-gamma-activated macrophages.</title>
        <authorList>
            <person name="Trost M."/>
            <person name="English L."/>
            <person name="Lemieux S."/>
            <person name="Courcelles M."/>
            <person name="Desjardins M."/>
            <person name="Thibault P."/>
        </authorList>
    </citation>
    <scope>PHOSPHORYLATION [LARGE SCALE ANALYSIS] AT SER-106</scope>
    <scope>IDENTIFICATION BY MASS SPECTROMETRY [LARGE SCALE ANALYSIS]</scope>
</reference>
<reference key="10">
    <citation type="journal article" date="2009" name="Mol. Cell. Proteomics">
        <title>Large scale localization of protein phosphorylation by use of electron capture dissociation mass spectrometry.</title>
        <authorList>
            <person name="Sweet S.M."/>
            <person name="Bailey C.M."/>
            <person name="Cunningham D.L."/>
            <person name="Heath J.K."/>
            <person name="Cooper H.J."/>
        </authorList>
    </citation>
    <scope>PHOSPHORYLATION [LARGE SCALE ANALYSIS] AT SER-106</scope>
    <scope>IDENTIFICATION BY MASS SPECTROMETRY [LARGE SCALE ANALYSIS]</scope>
    <source>
        <tissue>Embryonic fibroblast</tissue>
    </source>
</reference>
<reference key="11">
    <citation type="journal article" date="2010" name="Cell">
        <title>A tissue-specific atlas of mouse protein phosphorylation and expression.</title>
        <authorList>
            <person name="Huttlin E.L."/>
            <person name="Jedrychowski M.P."/>
            <person name="Elias J.E."/>
            <person name="Goswami T."/>
            <person name="Rad R."/>
            <person name="Beausoleil S.A."/>
            <person name="Villen J."/>
            <person name="Haas W."/>
            <person name="Sowa M.E."/>
            <person name="Gygi S.P."/>
        </authorList>
    </citation>
    <scope>PHOSPHORYLATION [LARGE SCALE ANALYSIS] AT SER-83; THR-88 AND SER-106</scope>
    <scope>IDENTIFICATION BY MASS SPECTROMETRY [LARGE SCALE ANALYSIS]</scope>
    <source>
        <tissue>Brain</tissue>
        <tissue>Brown adipose tissue</tissue>
        <tissue>Heart</tissue>
        <tissue>Kidney</tissue>
        <tissue>Liver</tissue>
        <tissue>Lung</tissue>
        <tissue>Pancreas</tissue>
        <tissue>Spleen</tissue>
        <tissue>Testis</tissue>
    </source>
</reference>
<feature type="initiator methionine" description="Removed" evidence="6">
    <location>
        <position position="1"/>
    </location>
</feature>
<feature type="chain" id="PRO_0000155022" description="Elongation factor 1-beta">
    <location>
        <begin position="2"/>
        <end position="225"/>
    </location>
</feature>
<feature type="domain" description="GST C-terminal">
    <location>
        <begin position="2"/>
        <end position="90"/>
    </location>
</feature>
<feature type="region of interest" description="Disordered" evidence="5">
    <location>
        <begin position="73"/>
        <end position="115"/>
    </location>
</feature>
<feature type="compositionally biased region" description="Acidic residues" evidence="5">
    <location>
        <begin position="96"/>
        <end position="113"/>
    </location>
</feature>
<feature type="modified residue" description="N6-acetyllysine" evidence="3">
    <location>
        <position position="7"/>
    </location>
</feature>
<feature type="modified residue" description="Phosphoserine" evidence="3">
    <location>
        <position position="42"/>
    </location>
</feature>
<feature type="modified residue" description="Phosphoserine" evidence="13">
    <location>
        <position position="83"/>
    </location>
</feature>
<feature type="modified residue" description="Phosphothreonine" evidence="13">
    <location>
        <position position="88"/>
    </location>
</feature>
<feature type="modified residue" description="Phosphoserine" evidence="8 9 10 11 12 13">
    <location>
        <position position="106"/>
    </location>
</feature>
<feature type="modified residue" description="Phosphoserine" evidence="3">
    <location>
        <position position="174"/>
    </location>
</feature>
<feature type="cross-link" description="Glycyl lysine isopeptide (Lys-Gly) (interchain with G-Cter in SUMO2)" evidence="3">
    <location>
        <position position="147"/>
    </location>
</feature>
<feature type="sequence conflict" description="In Ref. 2; BAB28447." evidence="7" ref="2">
    <original>E</original>
    <variation>G</variation>
    <location>
        <position position="113"/>
    </location>
</feature>
<feature type="sequence conflict" description="In Ref. 1; AAC13264." evidence="7" ref="1">
    <original>K</original>
    <variation>E</variation>
    <location>
        <position position="116"/>
    </location>
</feature>
<feature type="sequence conflict" description="In Ref. 1; AAC13264." evidence="7" ref="1">
    <original>V</original>
    <variation>I</variation>
    <location>
        <position position="136"/>
    </location>
</feature>
<comment type="function">
    <text evidence="4">Catalytic subunit of the guanine nucleotide exchange factor (GEF) (eEF1B subcomplex) of the eukaryotic elongation factor 1 complex (eEF1). Stimulates the exchange of GDP for GTP on elongation factor 1A (eEF1A), probably by displacing GDP from the nucleotide binding pocket in eEF1A.</text>
</comment>
<comment type="subunit">
    <text evidence="2 7">EF-1 is composed of 4 subunits: alpha, beta (alpha subunit of the eEF1B subcomplex), delta (beta subunit of the eEF1B subcomplex), and gamma (gamma subunit of the eEF1B subcomplex) (Probable). Interacts with elongation factor EEF1A1 (By similarity).</text>
</comment>
<comment type="PTM">
    <text evidence="1">Phosphorylation affects the GDP/GTP exchange rate.</text>
</comment>
<comment type="similarity">
    <text evidence="7">Belongs to the EF-1-beta/EF-1-delta family.</text>
</comment>
<comment type="sequence caution" evidence="7">
    <conflict type="erroneous initiation">
        <sequence resource="EMBL-CDS" id="AAH39635"/>
    </conflict>
</comment>
<protein>
    <recommendedName>
        <fullName>Elongation factor 1-beta</fullName>
        <shortName>EF-1-beta</shortName>
    </recommendedName>
    <alternativeName>
        <fullName evidence="7">eEF-1B alpha</fullName>
    </alternativeName>
</protein>
<accession>O70251</accession>
<accession>Q3THP5</accession>
<accession>Q5SUH1</accession>
<accession>Q8CHS1</accession>
<accession>Q99L22</accession>
<accession>Q9CZD4</accession>
<name>EF1B_MOUSE</name>